<comment type="catalytic activity">
    <reaction evidence="2">
        <text>GTP + H2O = 7,8-dihydroneopterin 3'-triphosphate + formate + H(+)</text>
        <dbReference type="Rhea" id="RHEA:17473"/>
        <dbReference type="ChEBI" id="CHEBI:15377"/>
        <dbReference type="ChEBI" id="CHEBI:15378"/>
        <dbReference type="ChEBI" id="CHEBI:15740"/>
        <dbReference type="ChEBI" id="CHEBI:37565"/>
        <dbReference type="ChEBI" id="CHEBI:58462"/>
        <dbReference type="EC" id="3.5.4.16"/>
    </reaction>
</comment>
<comment type="pathway">
    <text evidence="2">Cofactor biosynthesis; 7,8-dihydroneopterin triphosphate biosynthesis; 7,8-dihydroneopterin triphosphate from GTP: step 1/1.</text>
</comment>
<comment type="subunit">
    <text evidence="1">Toroid-shaped homodecamer, composed of two pentamers of five dimers.</text>
</comment>
<comment type="similarity">
    <text evidence="2">Belongs to the GTP cyclohydrolase I family.</text>
</comment>
<reference key="1">
    <citation type="journal article" date="2002" name="Proc. Natl. Acad. Sci. U.S.A.">
        <title>The genome sequence of Bifidobacterium longum reflects its adaptation to the human gastrointestinal tract.</title>
        <authorList>
            <person name="Schell M.A."/>
            <person name="Karmirantzou M."/>
            <person name="Snel B."/>
            <person name="Vilanova D."/>
            <person name="Berger B."/>
            <person name="Pessi G."/>
            <person name="Zwahlen M.-C."/>
            <person name="Desiere F."/>
            <person name="Bork P."/>
            <person name="Delley M."/>
            <person name="Pridmore R.D."/>
            <person name="Arigoni F."/>
        </authorList>
    </citation>
    <scope>NUCLEOTIDE SEQUENCE [LARGE SCALE GENOMIC DNA]</scope>
    <source>
        <strain>NCC 2705</strain>
    </source>
</reference>
<gene>
    <name evidence="2" type="primary">folE</name>
    <name type="ordered locus">BL1683</name>
</gene>
<sequence length="199" mass="22302">MNEYIESCHREKHTYDEEGVREAVRLFLKSIGEDPEREGLVETPDRIARACRELFTGLQASPADALEKHFDVDTDELVLVKDIELYSVCEHHLLPFHGVAHVGYIPAKDGVMGLSKLARLVEVYARRPQVQERLTQQIADALVEYAGARGVIVVTECEHLCMSMRGIKKSSARTVTSAVRGMLRNPATRAEAMSLILDK</sequence>
<organism>
    <name type="scientific">Bifidobacterium longum (strain NCC 2705)</name>
    <dbReference type="NCBI Taxonomy" id="206672"/>
    <lineage>
        <taxon>Bacteria</taxon>
        <taxon>Bacillati</taxon>
        <taxon>Actinomycetota</taxon>
        <taxon>Actinomycetes</taxon>
        <taxon>Bifidobacteriales</taxon>
        <taxon>Bifidobacteriaceae</taxon>
        <taxon>Bifidobacterium</taxon>
    </lineage>
</organism>
<feature type="chain" id="PRO_0000119388" description="GTP cyclohydrolase 1">
    <location>
        <begin position="1"/>
        <end position="199"/>
    </location>
</feature>
<feature type="binding site" evidence="2">
    <location>
        <position position="89"/>
    </location>
    <ligand>
        <name>Zn(2+)</name>
        <dbReference type="ChEBI" id="CHEBI:29105"/>
    </ligand>
</feature>
<feature type="binding site" evidence="2">
    <location>
        <position position="92"/>
    </location>
    <ligand>
        <name>Zn(2+)</name>
        <dbReference type="ChEBI" id="CHEBI:29105"/>
    </ligand>
</feature>
<feature type="binding site" evidence="2">
    <location>
        <position position="161"/>
    </location>
    <ligand>
        <name>Zn(2+)</name>
        <dbReference type="ChEBI" id="CHEBI:29105"/>
    </ligand>
</feature>
<keyword id="KW-0342">GTP-binding</keyword>
<keyword id="KW-0378">Hydrolase</keyword>
<keyword id="KW-0479">Metal-binding</keyword>
<keyword id="KW-0547">Nucleotide-binding</keyword>
<keyword id="KW-0554">One-carbon metabolism</keyword>
<keyword id="KW-1185">Reference proteome</keyword>
<keyword id="KW-0862">Zinc</keyword>
<proteinExistence type="inferred from homology"/>
<accession>Q8G3S1</accession>
<dbReference type="EC" id="3.5.4.16" evidence="2"/>
<dbReference type="EMBL" id="AE014295">
    <property type="protein sequence ID" value="AAN25470.1"/>
    <property type="molecule type" value="Genomic_DNA"/>
</dbReference>
<dbReference type="RefSeq" id="NP_696834.1">
    <property type="nucleotide sequence ID" value="NC_004307.2"/>
</dbReference>
<dbReference type="RefSeq" id="WP_007052379.1">
    <property type="nucleotide sequence ID" value="NC_004307.2"/>
</dbReference>
<dbReference type="SMR" id="Q8G3S1"/>
<dbReference type="STRING" id="206672.BL1683"/>
<dbReference type="EnsemblBacteria" id="AAN25470">
    <property type="protein sequence ID" value="AAN25470"/>
    <property type="gene ID" value="BL1683"/>
</dbReference>
<dbReference type="KEGG" id="blo:BL1683"/>
<dbReference type="PATRIC" id="fig|206672.9.peg.1738"/>
<dbReference type="HOGENOM" id="CLU_049768_3_3_11"/>
<dbReference type="OrthoDB" id="9801207at2"/>
<dbReference type="PhylomeDB" id="Q8G3S1"/>
<dbReference type="UniPathway" id="UPA00848">
    <property type="reaction ID" value="UER00151"/>
</dbReference>
<dbReference type="Proteomes" id="UP000000439">
    <property type="component" value="Chromosome"/>
</dbReference>
<dbReference type="GO" id="GO:0005737">
    <property type="term" value="C:cytoplasm"/>
    <property type="evidence" value="ECO:0007669"/>
    <property type="project" value="TreeGrafter"/>
</dbReference>
<dbReference type="GO" id="GO:0005525">
    <property type="term" value="F:GTP binding"/>
    <property type="evidence" value="ECO:0007669"/>
    <property type="project" value="UniProtKB-KW"/>
</dbReference>
<dbReference type="GO" id="GO:0003934">
    <property type="term" value="F:GTP cyclohydrolase I activity"/>
    <property type="evidence" value="ECO:0007669"/>
    <property type="project" value="UniProtKB-UniRule"/>
</dbReference>
<dbReference type="GO" id="GO:0008270">
    <property type="term" value="F:zinc ion binding"/>
    <property type="evidence" value="ECO:0007669"/>
    <property type="project" value="UniProtKB-UniRule"/>
</dbReference>
<dbReference type="GO" id="GO:0006730">
    <property type="term" value="P:one-carbon metabolic process"/>
    <property type="evidence" value="ECO:0007669"/>
    <property type="project" value="UniProtKB-UniRule"/>
</dbReference>
<dbReference type="GO" id="GO:0006729">
    <property type="term" value="P:tetrahydrobiopterin biosynthetic process"/>
    <property type="evidence" value="ECO:0007669"/>
    <property type="project" value="TreeGrafter"/>
</dbReference>
<dbReference type="GO" id="GO:0046654">
    <property type="term" value="P:tetrahydrofolate biosynthetic process"/>
    <property type="evidence" value="ECO:0007669"/>
    <property type="project" value="UniProtKB-UniRule"/>
</dbReference>
<dbReference type="FunFam" id="3.30.1130.10:FF:000001">
    <property type="entry name" value="GTP cyclohydrolase 1"/>
    <property type="match status" value="1"/>
</dbReference>
<dbReference type="Gene3D" id="1.10.286.10">
    <property type="match status" value="1"/>
</dbReference>
<dbReference type="Gene3D" id="3.30.1130.10">
    <property type="match status" value="1"/>
</dbReference>
<dbReference type="HAMAP" id="MF_00223">
    <property type="entry name" value="FolE"/>
    <property type="match status" value="1"/>
</dbReference>
<dbReference type="InterPro" id="IPR043133">
    <property type="entry name" value="GTP-CH-I_C/QueF"/>
</dbReference>
<dbReference type="InterPro" id="IPR043134">
    <property type="entry name" value="GTP-CH-I_N"/>
</dbReference>
<dbReference type="InterPro" id="IPR001474">
    <property type="entry name" value="GTP_CycHdrlase_I"/>
</dbReference>
<dbReference type="InterPro" id="IPR018234">
    <property type="entry name" value="GTP_CycHdrlase_I_CS"/>
</dbReference>
<dbReference type="InterPro" id="IPR020602">
    <property type="entry name" value="GTP_CycHdrlase_I_dom"/>
</dbReference>
<dbReference type="NCBIfam" id="TIGR00063">
    <property type="entry name" value="folE"/>
    <property type="match status" value="1"/>
</dbReference>
<dbReference type="NCBIfam" id="NF006825">
    <property type="entry name" value="PRK09347.1-2"/>
    <property type="match status" value="1"/>
</dbReference>
<dbReference type="NCBIfam" id="NF006826">
    <property type="entry name" value="PRK09347.1-3"/>
    <property type="match status" value="1"/>
</dbReference>
<dbReference type="PANTHER" id="PTHR11109:SF7">
    <property type="entry name" value="GTP CYCLOHYDROLASE 1"/>
    <property type="match status" value="1"/>
</dbReference>
<dbReference type="PANTHER" id="PTHR11109">
    <property type="entry name" value="GTP CYCLOHYDROLASE I"/>
    <property type="match status" value="1"/>
</dbReference>
<dbReference type="Pfam" id="PF01227">
    <property type="entry name" value="GTP_cyclohydroI"/>
    <property type="match status" value="1"/>
</dbReference>
<dbReference type="SUPFAM" id="SSF55620">
    <property type="entry name" value="Tetrahydrobiopterin biosynthesis enzymes-like"/>
    <property type="match status" value="1"/>
</dbReference>
<dbReference type="PROSITE" id="PS00859">
    <property type="entry name" value="GTP_CYCLOHYDROL_1_1"/>
    <property type="match status" value="1"/>
</dbReference>
<dbReference type="PROSITE" id="PS00860">
    <property type="entry name" value="GTP_CYCLOHYDROL_1_2"/>
    <property type="match status" value="1"/>
</dbReference>
<protein>
    <recommendedName>
        <fullName evidence="2">GTP cyclohydrolase 1</fullName>
        <ecNumber evidence="2">3.5.4.16</ecNumber>
    </recommendedName>
    <alternativeName>
        <fullName evidence="2">GTP cyclohydrolase I</fullName>
        <shortName evidence="2">GTP-CH-I</shortName>
    </alternativeName>
</protein>
<name>GCH1_BIFLO</name>
<evidence type="ECO:0000250" key="1"/>
<evidence type="ECO:0000255" key="2">
    <source>
        <dbReference type="HAMAP-Rule" id="MF_00223"/>
    </source>
</evidence>